<reference key="1">
    <citation type="submission" date="2001-12" db="EMBL/GenBank/DDBJ databases">
        <title>Arabidopsis thaliana transcription factor WRKY10.</title>
        <authorList>
            <person name="Ulker B."/>
            <person name="Kushnir S."/>
            <person name="Somssich I.E."/>
        </authorList>
    </citation>
    <scope>NUCLEOTIDE SEQUENCE [MRNA]</scope>
    <source>
        <strain>cv. Columbia</strain>
        <tissue>Flower</tissue>
    </source>
</reference>
<reference key="2">
    <citation type="journal article" date="2000" name="Nature">
        <title>Sequence and analysis of chromosome 1 of the plant Arabidopsis thaliana.</title>
        <authorList>
            <person name="Theologis A."/>
            <person name="Ecker J.R."/>
            <person name="Palm C.J."/>
            <person name="Federspiel N.A."/>
            <person name="Kaul S."/>
            <person name="White O."/>
            <person name="Alonso J."/>
            <person name="Altafi H."/>
            <person name="Araujo R."/>
            <person name="Bowman C.L."/>
            <person name="Brooks S.Y."/>
            <person name="Buehler E."/>
            <person name="Chan A."/>
            <person name="Chao Q."/>
            <person name="Chen H."/>
            <person name="Cheuk R.F."/>
            <person name="Chin C.W."/>
            <person name="Chung M.K."/>
            <person name="Conn L."/>
            <person name="Conway A.B."/>
            <person name="Conway A.R."/>
            <person name="Creasy T.H."/>
            <person name="Dewar K."/>
            <person name="Dunn P."/>
            <person name="Etgu P."/>
            <person name="Feldblyum T.V."/>
            <person name="Feng J.-D."/>
            <person name="Fong B."/>
            <person name="Fujii C.Y."/>
            <person name="Gill J.E."/>
            <person name="Goldsmith A.D."/>
            <person name="Haas B."/>
            <person name="Hansen N.F."/>
            <person name="Hughes B."/>
            <person name="Huizar L."/>
            <person name="Hunter J.L."/>
            <person name="Jenkins J."/>
            <person name="Johnson-Hopson C."/>
            <person name="Khan S."/>
            <person name="Khaykin E."/>
            <person name="Kim C.J."/>
            <person name="Koo H.L."/>
            <person name="Kremenetskaia I."/>
            <person name="Kurtz D.B."/>
            <person name="Kwan A."/>
            <person name="Lam B."/>
            <person name="Langin-Hooper S."/>
            <person name="Lee A."/>
            <person name="Lee J.M."/>
            <person name="Lenz C.A."/>
            <person name="Li J.H."/>
            <person name="Li Y.-P."/>
            <person name="Lin X."/>
            <person name="Liu S.X."/>
            <person name="Liu Z.A."/>
            <person name="Luros J.S."/>
            <person name="Maiti R."/>
            <person name="Marziali A."/>
            <person name="Militscher J."/>
            <person name="Miranda M."/>
            <person name="Nguyen M."/>
            <person name="Nierman W.C."/>
            <person name="Osborne B.I."/>
            <person name="Pai G."/>
            <person name="Peterson J."/>
            <person name="Pham P.K."/>
            <person name="Rizzo M."/>
            <person name="Rooney T."/>
            <person name="Rowley D."/>
            <person name="Sakano H."/>
            <person name="Salzberg S.L."/>
            <person name="Schwartz J.R."/>
            <person name="Shinn P."/>
            <person name="Southwick A.M."/>
            <person name="Sun H."/>
            <person name="Tallon L.J."/>
            <person name="Tambunga G."/>
            <person name="Toriumi M.J."/>
            <person name="Town C.D."/>
            <person name="Utterback T."/>
            <person name="Van Aken S."/>
            <person name="Vaysberg M."/>
            <person name="Vysotskaia V.S."/>
            <person name="Walker M."/>
            <person name="Wu D."/>
            <person name="Yu G."/>
            <person name="Fraser C.M."/>
            <person name="Venter J.C."/>
            <person name="Davis R.W."/>
        </authorList>
    </citation>
    <scope>NUCLEOTIDE SEQUENCE [LARGE SCALE GENOMIC DNA]</scope>
    <source>
        <strain>cv. Columbia</strain>
    </source>
</reference>
<reference key="3">
    <citation type="journal article" date="2017" name="Plant J.">
        <title>Araport11: a complete reannotation of the Arabidopsis thaliana reference genome.</title>
        <authorList>
            <person name="Cheng C.Y."/>
            <person name="Krishnakumar V."/>
            <person name="Chan A.P."/>
            <person name="Thibaud-Nissen F."/>
            <person name="Schobel S."/>
            <person name="Town C.D."/>
        </authorList>
    </citation>
    <scope>GENOME REANNOTATION</scope>
    <source>
        <strain>cv. Columbia</strain>
    </source>
</reference>
<reference key="4">
    <citation type="journal article" date="2006" name="Plant Biotechnol. J.">
        <title>Simultaneous high-throughput recombinational cloning of open reading frames in closed and open configurations.</title>
        <authorList>
            <person name="Underwood B.A."/>
            <person name="Vanderhaeghen R."/>
            <person name="Whitford R."/>
            <person name="Town C.D."/>
            <person name="Hilson P."/>
        </authorList>
    </citation>
    <scope>NUCLEOTIDE SEQUENCE [LARGE SCALE MRNA]</scope>
    <source>
        <strain>cv. Columbia</strain>
    </source>
</reference>
<reference key="5">
    <citation type="journal article" date="2005" name="Proc. Natl. Acad. Sci. U.S.A.">
        <title>MINISEED3 (MINI3), a WRKY family gene, and HAIKU2 (IKU2), a leucine-rich repeat (LRR) KINASE gene, are regulators of seed size in Arabidopsis.</title>
        <authorList>
            <person name="Luo M."/>
            <person name="Dennis E.S."/>
            <person name="Berger F."/>
            <person name="Peacock W.J."/>
            <person name="Chaudhury A."/>
        </authorList>
    </citation>
    <scope>FUNCTION</scope>
    <scope>SUBCELLULAR LOCATION</scope>
    <scope>TISSUE SPECIFICITY</scope>
    <scope>DEVELOPMENTAL STAGE</scope>
    <scope>MUTAGENESIS OF GLU-344</scope>
</reference>
<reference key="6">
    <citation type="journal article" date="2010" name="Plant J.">
        <title>The VQ motif protein IKU1 regulates endosperm growth and seed size in Arabidopsis.</title>
        <authorList>
            <person name="Wang A."/>
            <person name="Garcia D."/>
            <person name="Zhang H."/>
            <person name="Feng K."/>
            <person name="Chaudhury A."/>
            <person name="Berger F."/>
            <person name="Peacock W.J."/>
            <person name="Dennis E.S."/>
            <person name="Luo M."/>
        </authorList>
    </citation>
    <scope>INTERACTION WITH IKU1</scope>
</reference>
<proteinExistence type="evidence at protein level"/>
<protein>
    <recommendedName>
        <fullName>Probable WRKY transcription factor 10</fullName>
    </recommendedName>
    <alternativeName>
        <fullName>Protein MINISEED 3</fullName>
    </alternativeName>
    <alternativeName>
        <fullName>WRKY DNA-binding protein 10</fullName>
    </alternativeName>
</protein>
<organism>
    <name type="scientific">Arabidopsis thaliana</name>
    <name type="common">Mouse-ear cress</name>
    <dbReference type="NCBI Taxonomy" id="3702"/>
    <lineage>
        <taxon>Eukaryota</taxon>
        <taxon>Viridiplantae</taxon>
        <taxon>Streptophyta</taxon>
        <taxon>Embryophyta</taxon>
        <taxon>Tracheophyta</taxon>
        <taxon>Spermatophyta</taxon>
        <taxon>Magnoliopsida</taxon>
        <taxon>eudicotyledons</taxon>
        <taxon>Gunneridae</taxon>
        <taxon>Pentapetalae</taxon>
        <taxon>rosids</taxon>
        <taxon>malvids</taxon>
        <taxon>Brassicales</taxon>
        <taxon>Brassicaceae</taxon>
        <taxon>Camelineae</taxon>
        <taxon>Arabidopsis</taxon>
    </lineage>
</organism>
<keyword id="KW-0238">DNA-binding</keyword>
<keyword id="KW-0479">Metal-binding</keyword>
<keyword id="KW-0539">Nucleus</keyword>
<keyword id="KW-1185">Reference proteome</keyword>
<keyword id="KW-0804">Transcription</keyword>
<keyword id="KW-0805">Transcription regulation</keyword>
<keyword id="KW-0862">Zinc</keyword>
<sequence>MSDFDENFIEMTSYWAPPSSPSPRTILAMLEQTDNGLNPISEIFPQESLPRDHTDQSGQRSGLRERLAARVGFNLPTLNTEENMSPLDAFFRSSNVPNSPVVAISPGFSPSALLHTPNMVSDSSQIIPPSSATNYGPLEMVETSGEDNAAMMMFNNDLPYQPYNVDLPSLEVFDDIATEESFYIPSYEPHVDPIGTPLVTSFESELVDDAHTDIISIEDSESEDGNKDDDDEDFQYEDEDEDQYDQDQDVDEDEEEEKDEDNVALDDPQPPPPKRRRYEVSNMIGATRTSKTQRIILQMESDEDNPNDGYRWRKYGQKVVKGNPNPRSYFKCTNIECRVKKHVERGADNIKLVVTTYDGIHNHPSPPARRSNSSSRNRSAGATIPQNQNDRTSRLGRAPPTPTPPTPPPSSYTPEEMRPFSSLATEIDLTEVYMTGISMLPNIPVYENSGFMYQNDEPTMNAMPDGSDVYDGIMERLYFKFGVDM</sequence>
<accession>Q9LG05</accession>
<accession>Q1PFK1</accession>
<accession>Q8VWQ3</accession>
<comment type="function">
    <text evidence="1 4">Transcription factor. Interacts specifically with the W box (5'-(T)TGAC[CT]-3'), a frequently occurring elicitor-responsive cis-acting element (By similarity). Modulates seed size by negatively regulating the cellularization of syncytial endosperm (PubMed:16293693).</text>
</comment>
<comment type="subunit">
    <text evidence="5">Interacts with IKU1.</text>
</comment>
<comment type="subcellular location">
    <subcellularLocation>
        <location evidence="2 4">Nucleus</location>
    </subcellularLocation>
</comment>
<comment type="tissue specificity">
    <text evidence="4">Expressed in male gametophytes (pollen) and in the endosperm of fertilized ovules.</text>
</comment>
<comment type="developmental stage">
    <text evidence="4">Expressed in the endosperm of embryo from the two nuclei stage to the late globular embryo stage, including the endosperm cellularization time.</text>
</comment>
<comment type="similarity">
    <text evidence="6">Belongs to the WRKY group I family.</text>
</comment>
<comment type="sequence caution" evidence="6">
    <conflict type="erroneous gene model prediction">
        <sequence resource="EMBL-CDS" id="AAF79511"/>
    </conflict>
</comment>
<feature type="chain" id="PRO_0000133652" description="Probable WRKY transcription factor 10">
    <location>
        <begin position="1"/>
        <end position="485"/>
    </location>
</feature>
<feature type="DNA-binding region" description="WRKY" evidence="2">
    <location>
        <begin position="301"/>
        <end position="366"/>
    </location>
</feature>
<feature type="region of interest" description="Disordered" evidence="3">
    <location>
        <begin position="43"/>
        <end position="62"/>
    </location>
</feature>
<feature type="region of interest" description="Disordered" evidence="3">
    <location>
        <begin position="215"/>
        <end position="293"/>
    </location>
</feature>
<feature type="region of interest" description="Disordered" evidence="3">
    <location>
        <begin position="358"/>
        <end position="417"/>
    </location>
</feature>
<feature type="compositionally biased region" description="Acidic residues" evidence="3">
    <location>
        <begin position="216"/>
        <end position="264"/>
    </location>
</feature>
<feature type="compositionally biased region" description="Low complexity" evidence="3">
    <location>
        <begin position="368"/>
        <end position="380"/>
    </location>
</feature>
<feature type="compositionally biased region" description="Pro residues" evidence="3">
    <location>
        <begin position="399"/>
        <end position="411"/>
    </location>
</feature>
<feature type="binding site" evidence="1">
    <location>
        <position position="332"/>
    </location>
    <ligand>
        <name>Zn(2+)</name>
        <dbReference type="ChEBI" id="CHEBI:29105"/>
    </ligand>
</feature>
<feature type="binding site" evidence="1">
    <location>
        <position position="337"/>
    </location>
    <ligand>
        <name>Zn(2+)</name>
        <dbReference type="ChEBI" id="CHEBI:29105"/>
    </ligand>
</feature>
<feature type="binding site" evidence="1">
    <location>
        <position position="361"/>
    </location>
    <ligand>
        <name>Zn(2+)</name>
        <dbReference type="ChEBI" id="CHEBI:29105"/>
    </ligand>
</feature>
<feature type="binding site" evidence="1">
    <location>
        <position position="363"/>
    </location>
    <ligand>
        <name>Zn(2+)</name>
        <dbReference type="ChEBI" id="CHEBI:29105"/>
    </ligand>
</feature>
<feature type="mutagenesis site" description="In mini3-1; reduced seed size and earlier endosperm cellularization." evidence="4">
    <original>E</original>
    <variation>K</variation>
    <location>
        <position position="344"/>
    </location>
</feature>
<dbReference type="EMBL" id="AY071851">
    <property type="protein sequence ID" value="AAL61861.1"/>
    <property type="molecule type" value="mRNA"/>
</dbReference>
<dbReference type="EMBL" id="AC002328">
    <property type="protein sequence ID" value="AAF79511.1"/>
    <property type="status" value="ALT_SEQ"/>
    <property type="molecule type" value="Genomic_DNA"/>
</dbReference>
<dbReference type="EMBL" id="CP002684">
    <property type="protein sequence ID" value="AEE33270.1"/>
    <property type="molecule type" value="Genomic_DNA"/>
</dbReference>
<dbReference type="EMBL" id="DQ446362">
    <property type="protein sequence ID" value="ABE65713.1"/>
    <property type="molecule type" value="mRNA"/>
</dbReference>
<dbReference type="RefSeq" id="NP_175956.1">
    <property type="nucleotide sequence ID" value="NM_104436.2"/>
</dbReference>
<dbReference type="SMR" id="Q9LG05"/>
<dbReference type="BioGRID" id="27234">
    <property type="interactions" value="1"/>
</dbReference>
<dbReference type="IntAct" id="Q9LG05">
    <property type="interactions" value="1"/>
</dbReference>
<dbReference type="STRING" id="3702.Q9LG05"/>
<dbReference type="GlyGen" id="Q9LG05">
    <property type="glycosylation" value="3 sites"/>
</dbReference>
<dbReference type="PaxDb" id="3702-AT1G55600.1"/>
<dbReference type="ProteomicsDB" id="232452"/>
<dbReference type="EnsemblPlants" id="AT1G55600.1">
    <property type="protein sequence ID" value="AT1G55600.1"/>
    <property type="gene ID" value="AT1G55600"/>
</dbReference>
<dbReference type="GeneID" id="842009"/>
<dbReference type="Gramene" id="AT1G55600.1">
    <property type="protein sequence ID" value="AT1G55600.1"/>
    <property type="gene ID" value="AT1G55600"/>
</dbReference>
<dbReference type="KEGG" id="ath:AT1G55600"/>
<dbReference type="Araport" id="AT1G55600"/>
<dbReference type="TAIR" id="AT1G55600">
    <property type="gene designation" value="WRKY10"/>
</dbReference>
<dbReference type="eggNOG" id="ENOG502QU86">
    <property type="taxonomic scope" value="Eukaryota"/>
</dbReference>
<dbReference type="HOGENOM" id="CLU_027756_0_0_1"/>
<dbReference type="InParanoid" id="Q9LG05"/>
<dbReference type="OMA" id="NFIEMTS"/>
<dbReference type="PhylomeDB" id="Q9LG05"/>
<dbReference type="PRO" id="PR:Q9LG05"/>
<dbReference type="Proteomes" id="UP000006548">
    <property type="component" value="Chromosome 1"/>
</dbReference>
<dbReference type="ExpressionAtlas" id="Q9LG05">
    <property type="expression patterns" value="baseline and differential"/>
</dbReference>
<dbReference type="GO" id="GO:0005634">
    <property type="term" value="C:nucleus"/>
    <property type="evidence" value="ECO:0007669"/>
    <property type="project" value="UniProtKB-SubCell"/>
</dbReference>
<dbReference type="GO" id="GO:0003700">
    <property type="term" value="F:DNA-binding transcription factor activity"/>
    <property type="evidence" value="ECO:0000314"/>
    <property type="project" value="TAIR"/>
</dbReference>
<dbReference type="GO" id="GO:0046872">
    <property type="term" value="F:metal ion binding"/>
    <property type="evidence" value="ECO:0007669"/>
    <property type="project" value="UniProtKB-KW"/>
</dbReference>
<dbReference type="GO" id="GO:0043565">
    <property type="term" value="F:sequence-specific DNA binding"/>
    <property type="evidence" value="ECO:0007669"/>
    <property type="project" value="InterPro"/>
</dbReference>
<dbReference type="GO" id="GO:0009960">
    <property type="term" value="P:endosperm development"/>
    <property type="evidence" value="ECO:0000315"/>
    <property type="project" value="TAIR"/>
</dbReference>
<dbReference type="FunFam" id="2.20.25.80:FF:000003">
    <property type="entry name" value="WRKY transcription factor 57"/>
    <property type="match status" value="1"/>
</dbReference>
<dbReference type="Gene3D" id="2.20.25.80">
    <property type="entry name" value="WRKY domain"/>
    <property type="match status" value="1"/>
</dbReference>
<dbReference type="InterPro" id="IPR003657">
    <property type="entry name" value="WRKY_dom"/>
</dbReference>
<dbReference type="InterPro" id="IPR036576">
    <property type="entry name" value="WRKY_dom_sf"/>
</dbReference>
<dbReference type="InterPro" id="IPR044810">
    <property type="entry name" value="WRKY_plant"/>
</dbReference>
<dbReference type="PANTHER" id="PTHR31221:SF239">
    <property type="entry name" value="WRKY TRANSCRIPTION FACTOR 10-RELATED"/>
    <property type="match status" value="1"/>
</dbReference>
<dbReference type="PANTHER" id="PTHR31221">
    <property type="entry name" value="WRKY TRANSCRIPTION FACTOR PROTEIN 1-RELATED"/>
    <property type="match status" value="1"/>
</dbReference>
<dbReference type="Pfam" id="PF03106">
    <property type="entry name" value="WRKY"/>
    <property type="match status" value="1"/>
</dbReference>
<dbReference type="SMART" id="SM00774">
    <property type="entry name" value="WRKY"/>
    <property type="match status" value="1"/>
</dbReference>
<dbReference type="SUPFAM" id="SSF118290">
    <property type="entry name" value="WRKY DNA-binding domain"/>
    <property type="match status" value="1"/>
</dbReference>
<dbReference type="PROSITE" id="PS50811">
    <property type="entry name" value="WRKY"/>
    <property type="match status" value="1"/>
</dbReference>
<gene>
    <name type="primary">WRKY10</name>
    <name type="synonym">MINI3</name>
    <name type="ordered locus">At1g55600</name>
    <name type="ORF">F20N2.3</name>
</gene>
<name>WRK10_ARATH</name>
<evidence type="ECO:0000250" key="1">
    <source>
        <dbReference type="UniProtKB" id="Q9SI37"/>
    </source>
</evidence>
<evidence type="ECO:0000255" key="2">
    <source>
        <dbReference type="PROSITE-ProRule" id="PRU00223"/>
    </source>
</evidence>
<evidence type="ECO:0000256" key="3">
    <source>
        <dbReference type="SAM" id="MobiDB-lite"/>
    </source>
</evidence>
<evidence type="ECO:0000269" key="4">
    <source>
    </source>
</evidence>
<evidence type="ECO:0000269" key="5">
    <source>
    </source>
</evidence>
<evidence type="ECO:0000305" key="6"/>